<protein>
    <recommendedName>
        <fullName evidence="1">Potassium-transporting ATPase KdpC subunit</fullName>
    </recommendedName>
    <alternativeName>
        <fullName evidence="1">ATP phosphohydrolase [potassium-transporting] C chain</fullName>
    </alternativeName>
    <alternativeName>
        <fullName evidence="1">Potassium-binding and translocating subunit C</fullName>
    </alternativeName>
    <alternativeName>
        <fullName evidence="1">Potassium-translocating ATPase C chain</fullName>
    </alternativeName>
</protein>
<comment type="function">
    <text evidence="1">Part of the high-affinity ATP-driven potassium transport (or Kdp) system, which catalyzes the hydrolysis of ATP coupled with the electrogenic transport of potassium into the cytoplasm. This subunit acts as a catalytic chaperone that increases the ATP-binding affinity of the ATP-hydrolyzing subunit KdpB by the formation of a transient KdpB/KdpC/ATP ternary complex.</text>
</comment>
<comment type="subunit">
    <text evidence="1">The system is composed of three essential subunits: KdpA, KdpB and KdpC.</text>
</comment>
<comment type="subcellular location">
    <subcellularLocation>
        <location evidence="1">Cell inner membrane</location>
        <topology evidence="1">Single-pass membrane protein</topology>
    </subcellularLocation>
</comment>
<comment type="similarity">
    <text evidence="1">Belongs to the KdpC family.</text>
</comment>
<feature type="chain" id="PRO_0000197006" description="Potassium-transporting ATPase KdpC subunit">
    <location>
        <begin position="1"/>
        <end position="189"/>
    </location>
</feature>
<feature type="transmembrane region" description="Helical" evidence="1">
    <location>
        <begin position="7"/>
        <end position="27"/>
    </location>
</feature>
<sequence>MLNQLRPALVLTFALTLITGLGYPLLITGVAQALMPAEANGSLVRKGSVLIGSQLIGQNFASEKYFWPRPSATGPEPYNAVASSGSNLGTTSDKLKERVAADIERLRAAGIGGEIPADAGMASGSGLDPHISPEFARVQIARVAKARGLPEAGVDALVDRATQGRLFGLIGEPRVNVLELNLALDAPRT</sequence>
<accession>Q92XJ1</accession>
<reference key="1">
    <citation type="journal article" date="2001" name="Proc. Natl. Acad. Sci. U.S.A.">
        <title>Nucleotide sequence and predicted functions of the entire Sinorhizobium meliloti pSymA megaplasmid.</title>
        <authorList>
            <person name="Barnett M.J."/>
            <person name="Fisher R.F."/>
            <person name="Jones T."/>
            <person name="Komp C."/>
            <person name="Abola A.P."/>
            <person name="Barloy-Hubler F."/>
            <person name="Bowser L."/>
            <person name="Capela D."/>
            <person name="Galibert F."/>
            <person name="Gouzy J."/>
            <person name="Gurjal M."/>
            <person name="Hong A."/>
            <person name="Huizar L."/>
            <person name="Hyman R.W."/>
            <person name="Kahn D."/>
            <person name="Kahn M.L."/>
            <person name="Kalman S."/>
            <person name="Keating D.H."/>
            <person name="Palm C."/>
            <person name="Peck M.C."/>
            <person name="Surzycki R."/>
            <person name="Wells D.H."/>
            <person name="Yeh K.-C."/>
            <person name="Davis R.W."/>
            <person name="Federspiel N.A."/>
            <person name="Long S.R."/>
        </authorList>
    </citation>
    <scope>NUCLEOTIDE SEQUENCE [LARGE SCALE GENOMIC DNA]</scope>
    <source>
        <strain>1021</strain>
    </source>
</reference>
<reference key="2">
    <citation type="journal article" date="2001" name="Science">
        <title>The composite genome of the legume symbiont Sinorhizobium meliloti.</title>
        <authorList>
            <person name="Galibert F."/>
            <person name="Finan T.M."/>
            <person name="Long S.R."/>
            <person name="Puehler A."/>
            <person name="Abola P."/>
            <person name="Ampe F."/>
            <person name="Barloy-Hubler F."/>
            <person name="Barnett M.J."/>
            <person name="Becker A."/>
            <person name="Boistard P."/>
            <person name="Bothe G."/>
            <person name="Boutry M."/>
            <person name="Bowser L."/>
            <person name="Buhrmester J."/>
            <person name="Cadieu E."/>
            <person name="Capela D."/>
            <person name="Chain P."/>
            <person name="Cowie A."/>
            <person name="Davis R.W."/>
            <person name="Dreano S."/>
            <person name="Federspiel N.A."/>
            <person name="Fisher R.F."/>
            <person name="Gloux S."/>
            <person name="Godrie T."/>
            <person name="Goffeau A."/>
            <person name="Golding B."/>
            <person name="Gouzy J."/>
            <person name="Gurjal M."/>
            <person name="Hernandez-Lucas I."/>
            <person name="Hong A."/>
            <person name="Huizar L."/>
            <person name="Hyman R.W."/>
            <person name="Jones T."/>
            <person name="Kahn D."/>
            <person name="Kahn M.L."/>
            <person name="Kalman S."/>
            <person name="Keating D.H."/>
            <person name="Kiss E."/>
            <person name="Komp C."/>
            <person name="Lelaure V."/>
            <person name="Masuy D."/>
            <person name="Palm C."/>
            <person name="Peck M.C."/>
            <person name="Pohl T.M."/>
            <person name="Portetelle D."/>
            <person name="Purnelle B."/>
            <person name="Ramsperger U."/>
            <person name="Surzycki R."/>
            <person name="Thebault P."/>
            <person name="Vandenbol M."/>
            <person name="Vorhoelter F.J."/>
            <person name="Weidner S."/>
            <person name="Wells D.H."/>
            <person name="Wong K."/>
            <person name="Yeh K.-C."/>
            <person name="Batut J."/>
        </authorList>
    </citation>
    <scope>NUCLEOTIDE SEQUENCE [LARGE SCALE GENOMIC DNA]</scope>
    <source>
        <strain>1021</strain>
    </source>
</reference>
<geneLocation type="plasmid">
    <name>pSymA</name>
    <name>megaplasmid 1</name>
</geneLocation>
<gene>
    <name evidence="1" type="primary">kdpC</name>
    <name type="ordered locus">RA1253</name>
    <name type="ORF">SMa2329</name>
</gene>
<name>KDPC_RHIME</name>
<organism>
    <name type="scientific">Rhizobium meliloti (strain 1021)</name>
    <name type="common">Ensifer meliloti</name>
    <name type="synonym">Sinorhizobium meliloti</name>
    <dbReference type="NCBI Taxonomy" id="266834"/>
    <lineage>
        <taxon>Bacteria</taxon>
        <taxon>Pseudomonadati</taxon>
        <taxon>Pseudomonadota</taxon>
        <taxon>Alphaproteobacteria</taxon>
        <taxon>Hyphomicrobiales</taxon>
        <taxon>Rhizobiaceae</taxon>
        <taxon>Sinorhizobium/Ensifer group</taxon>
        <taxon>Sinorhizobium</taxon>
    </lineage>
</organism>
<keyword id="KW-0067">ATP-binding</keyword>
<keyword id="KW-0997">Cell inner membrane</keyword>
<keyword id="KW-1003">Cell membrane</keyword>
<keyword id="KW-0406">Ion transport</keyword>
<keyword id="KW-0472">Membrane</keyword>
<keyword id="KW-0547">Nucleotide-binding</keyword>
<keyword id="KW-0614">Plasmid</keyword>
<keyword id="KW-0630">Potassium</keyword>
<keyword id="KW-0633">Potassium transport</keyword>
<keyword id="KW-1185">Reference proteome</keyword>
<keyword id="KW-0812">Transmembrane</keyword>
<keyword id="KW-1133">Transmembrane helix</keyword>
<keyword id="KW-0813">Transport</keyword>
<dbReference type="EMBL" id="AE006469">
    <property type="protein sequence ID" value="AAK65911.1"/>
    <property type="molecule type" value="Genomic_DNA"/>
</dbReference>
<dbReference type="PIR" id="E95418">
    <property type="entry name" value="E95418"/>
</dbReference>
<dbReference type="RefSeq" id="NP_436499.1">
    <property type="nucleotide sequence ID" value="NC_003037.1"/>
</dbReference>
<dbReference type="RefSeq" id="WP_010968196.1">
    <property type="nucleotide sequence ID" value="NC_003037.1"/>
</dbReference>
<dbReference type="SMR" id="Q92XJ1"/>
<dbReference type="EnsemblBacteria" id="AAK65911">
    <property type="protein sequence ID" value="AAK65911"/>
    <property type="gene ID" value="SMa2329"/>
</dbReference>
<dbReference type="KEGG" id="sme:SMa2329"/>
<dbReference type="PATRIC" id="fig|266834.11.peg.1306"/>
<dbReference type="HOGENOM" id="CLU_077094_2_0_5"/>
<dbReference type="OrthoDB" id="9788285at2"/>
<dbReference type="Proteomes" id="UP000001976">
    <property type="component" value="Plasmid pSymA"/>
</dbReference>
<dbReference type="GO" id="GO:0005886">
    <property type="term" value="C:plasma membrane"/>
    <property type="evidence" value="ECO:0007669"/>
    <property type="project" value="UniProtKB-SubCell"/>
</dbReference>
<dbReference type="GO" id="GO:0005524">
    <property type="term" value="F:ATP binding"/>
    <property type="evidence" value="ECO:0007669"/>
    <property type="project" value="UniProtKB-UniRule"/>
</dbReference>
<dbReference type="GO" id="GO:0008556">
    <property type="term" value="F:P-type potassium transmembrane transporter activity"/>
    <property type="evidence" value="ECO:0007669"/>
    <property type="project" value="InterPro"/>
</dbReference>
<dbReference type="HAMAP" id="MF_00276">
    <property type="entry name" value="KdpC"/>
    <property type="match status" value="1"/>
</dbReference>
<dbReference type="InterPro" id="IPR003820">
    <property type="entry name" value="KdpC"/>
</dbReference>
<dbReference type="NCBIfam" id="TIGR00681">
    <property type="entry name" value="kdpC"/>
    <property type="match status" value="1"/>
</dbReference>
<dbReference type="NCBIfam" id="NF001454">
    <property type="entry name" value="PRK00315.1"/>
    <property type="match status" value="1"/>
</dbReference>
<dbReference type="PANTHER" id="PTHR30042">
    <property type="entry name" value="POTASSIUM-TRANSPORTING ATPASE C CHAIN"/>
    <property type="match status" value="1"/>
</dbReference>
<dbReference type="PANTHER" id="PTHR30042:SF2">
    <property type="entry name" value="POTASSIUM-TRANSPORTING ATPASE KDPC SUBUNIT"/>
    <property type="match status" value="1"/>
</dbReference>
<dbReference type="Pfam" id="PF02669">
    <property type="entry name" value="KdpC"/>
    <property type="match status" value="1"/>
</dbReference>
<dbReference type="PIRSF" id="PIRSF001296">
    <property type="entry name" value="K_ATPase_KdpC"/>
    <property type="match status" value="1"/>
</dbReference>
<proteinExistence type="inferred from homology"/>
<evidence type="ECO:0000255" key="1">
    <source>
        <dbReference type="HAMAP-Rule" id="MF_00276"/>
    </source>
</evidence>